<sequence>MKPVIALVGRPNVGKSTLFNRLTRSRDALVADLPGLTRDRHYGEGRVGERPYLVVDTGGFEPVAKDGILHEMARQTRQAVEEADVVVFIVDGRNGLAPQDKSIADYLRKTGRPIFLVVNKAEGMKYTAVATDFYELGLGDPRAISAAHGDGVTDMINEALEVAYAGQPEEADDNDPSRGIKIAIVGRPNVGKSTLVNALIGEDRVIAFDMPGTTRDSIYVDFERNGKKYTLIDTAGLRRRGKVFEAIEKFSVVKTLQSISDANVVILLLDAQQDISDQDAHIAGFVVEQGRALVIGVNKWDGLDDHARDRAKADLTRKLKFLDFAKSHYISAAKKTGIGALMRSVDDAYAAAMAKLPTPKLTRALIEAVEFQQPRRRGPVRPKLRYAHQGGQNPPLIVIHGNALDAVTETYKRYLENRFRETFSLTGTPLRIEFRSSNNPYADKG</sequence>
<reference key="1">
    <citation type="submission" date="2007-03" db="EMBL/GenBank/DDBJ databases">
        <title>Complete sequence of chromosome 1 of Burkholderia vietnamiensis G4.</title>
        <authorList>
            <consortium name="US DOE Joint Genome Institute"/>
            <person name="Copeland A."/>
            <person name="Lucas S."/>
            <person name="Lapidus A."/>
            <person name="Barry K."/>
            <person name="Detter J.C."/>
            <person name="Glavina del Rio T."/>
            <person name="Hammon N."/>
            <person name="Israni S."/>
            <person name="Dalin E."/>
            <person name="Tice H."/>
            <person name="Pitluck S."/>
            <person name="Chain P."/>
            <person name="Malfatti S."/>
            <person name="Shin M."/>
            <person name="Vergez L."/>
            <person name="Schmutz J."/>
            <person name="Larimer F."/>
            <person name="Land M."/>
            <person name="Hauser L."/>
            <person name="Kyrpides N."/>
            <person name="Tiedje J."/>
            <person name="Richardson P."/>
        </authorList>
    </citation>
    <scope>NUCLEOTIDE SEQUENCE [LARGE SCALE GENOMIC DNA]</scope>
    <source>
        <strain>G4 / LMG 22486</strain>
    </source>
</reference>
<feature type="chain" id="PRO_1000011587" description="GTPase Der">
    <location>
        <begin position="1"/>
        <end position="445"/>
    </location>
</feature>
<feature type="domain" description="EngA-type G 1">
    <location>
        <begin position="3"/>
        <end position="167"/>
    </location>
</feature>
<feature type="domain" description="EngA-type G 2">
    <location>
        <begin position="180"/>
        <end position="353"/>
    </location>
</feature>
<feature type="domain" description="KH-like" evidence="1">
    <location>
        <begin position="354"/>
        <end position="438"/>
    </location>
</feature>
<feature type="binding site" evidence="1">
    <location>
        <begin position="9"/>
        <end position="16"/>
    </location>
    <ligand>
        <name>GTP</name>
        <dbReference type="ChEBI" id="CHEBI:37565"/>
        <label>1</label>
    </ligand>
</feature>
<feature type="binding site" evidence="1">
    <location>
        <begin position="56"/>
        <end position="60"/>
    </location>
    <ligand>
        <name>GTP</name>
        <dbReference type="ChEBI" id="CHEBI:37565"/>
        <label>1</label>
    </ligand>
</feature>
<feature type="binding site" evidence="1">
    <location>
        <begin position="119"/>
        <end position="122"/>
    </location>
    <ligand>
        <name>GTP</name>
        <dbReference type="ChEBI" id="CHEBI:37565"/>
        <label>1</label>
    </ligand>
</feature>
<feature type="binding site" evidence="1">
    <location>
        <begin position="186"/>
        <end position="193"/>
    </location>
    <ligand>
        <name>GTP</name>
        <dbReference type="ChEBI" id="CHEBI:37565"/>
        <label>2</label>
    </ligand>
</feature>
<feature type="binding site" evidence="1">
    <location>
        <begin position="233"/>
        <end position="237"/>
    </location>
    <ligand>
        <name>GTP</name>
        <dbReference type="ChEBI" id="CHEBI:37565"/>
        <label>2</label>
    </ligand>
</feature>
<feature type="binding site" evidence="1">
    <location>
        <begin position="298"/>
        <end position="301"/>
    </location>
    <ligand>
        <name>GTP</name>
        <dbReference type="ChEBI" id="CHEBI:37565"/>
        <label>2</label>
    </ligand>
</feature>
<name>DER_BURVG</name>
<accession>A4JEN6</accession>
<protein>
    <recommendedName>
        <fullName evidence="1">GTPase Der</fullName>
    </recommendedName>
    <alternativeName>
        <fullName evidence="1">GTP-binding protein EngA</fullName>
    </alternativeName>
</protein>
<dbReference type="EMBL" id="CP000614">
    <property type="protein sequence ID" value="ABO54739.1"/>
    <property type="molecule type" value="Genomic_DNA"/>
</dbReference>
<dbReference type="SMR" id="A4JEN6"/>
<dbReference type="KEGG" id="bvi:Bcep1808_1735"/>
<dbReference type="eggNOG" id="COG1160">
    <property type="taxonomic scope" value="Bacteria"/>
</dbReference>
<dbReference type="HOGENOM" id="CLU_016077_6_2_4"/>
<dbReference type="Proteomes" id="UP000002287">
    <property type="component" value="Chromosome 1"/>
</dbReference>
<dbReference type="GO" id="GO:0016887">
    <property type="term" value="F:ATP hydrolysis activity"/>
    <property type="evidence" value="ECO:0007669"/>
    <property type="project" value="InterPro"/>
</dbReference>
<dbReference type="GO" id="GO:0005525">
    <property type="term" value="F:GTP binding"/>
    <property type="evidence" value="ECO:0007669"/>
    <property type="project" value="UniProtKB-UniRule"/>
</dbReference>
<dbReference type="GO" id="GO:0043022">
    <property type="term" value="F:ribosome binding"/>
    <property type="evidence" value="ECO:0007669"/>
    <property type="project" value="TreeGrafter"/>
</dbReference>
<dbReference type="GO" id="GO:0042254">
    <property type="term" value="P:ribosome biogenesis"/>
    <property type="evidence" value="ECO:0007669"/>
    <property type="project" value="UniProtKB-KW"/>
</dbReference>
<dbReference type="CDD" id="cd01894">
    <property type="entry name" value="EngA1"/>
    <property type="match status" value="1"/>
</dbReference>
<dbReference type="CDD" id="cd01895">
    <property type="entry name" value="EngA2"/>
    <property type="match status" value="1"/>
</dbReference>
<dbReference type="FunFam" id="3.30.300.20:FF:000004">
    <property type="entry name" value="GTPase Der"/>
    <property type="match status" value="1"/>
</dbReference>
<dbReference type="FunFam" id="3.40.50.300:FF:000040">
    <property type="entry name" value="GTPase Der"/>
    <property type="match status" value="1"/>
</dbReference>
<dbReference type="FunFam" id="3.40.50.300:FF:000057">
    <property type="entry name" value="GTPase Der"/>
    <property type="match status" value="1"/>
</dbReference>
<dbReference type="Gene3D" id="3.30.300.20">
    <property type="match status" value="1"/>
</dbReference>
<dbReference type="Gene3D" id="3.40.50.300">
    <property type="entry name" value="P-loop containing nucleotide triphosphate hydrolases"/>
    <property type="match status" value="2"/>
</dbReference>
<dbReference type="HAMAP" id="MF_00195">
    <property type="entry name" value="GTPase_Der"/>
    <property type="match status" value="1"/>
</dbReference>
<dbReference type="InterPro" id="IPR003593">
    <property type="entry name" value="AAA+_ATPase"/>
</dbReference>
<dbReference type="InterPro" id="IPR031166">
    <property type="entry name" value="G_ENGA"/>
</dbReference>
<dbReference type="InterPro" id="IPR006073">
    <property type="entry name" value="GTP-bd"/>
</dbReference>
<dbReference type="InterPro" id="IPR016484">
    <property type="entry name" value="GTPase_Der"/>
</dbReference>
<dbReference type="InterPro" id="IPR032859">
    <property type="entry name" value="KH_dom-like"/>
</dbReference>
<dbReference type="InterPro" id="IPR015946">
    <property type="entry name" value="KH_dom-like_a/b"/>
</dbReference>
<dbReference type="InterPro" id="IPR027417">
    <property type="entry name" value="P-loop_NTPase"/>
</dbReference>
<dbReference type="InterPro" id="IPR005225">
    <property type="entry name" value="Small_GTP-bd"/>
</dbReference>
<dbReference type="NCBIfam" id="TIGR03594">
    <property type="entry name" value="GTPase_EngA"/>
    <property type="match status" value="1"/>
</dbReference>
<dbReference type="NCBIfam" id="TIGR00231">
    <property type="entry name" value="small_GTP"/>
    <property type="match status" value="2"/>
</dbReference>
<dbReference type="PANTHER" id="PTHR43834">
    <property type="entry name" value="GTPASE DER"/>
    <property type="match status" value="1"/>
</dbReference>
<dbReference type="PANTHER" id="PTHR43834:SF6">
    <property type="entry name" value="GTPASE DER"/>
    <property type="match status" value="1"/>
</dbReference>
<dbReference type="Pfam" id="PF14714">
    <property type="entry name" value="KH_dom-like"/>
    <property type="match status" value="1"/>
</dbReference>
<dbReference type="Pfam" id="PF01926">
    <property type="entry name" value="MMR_HSR1"/>
    <property type="match status" value="2"/>
</dbReference>
<dbReference type="PIRSF" id="PIRSF006485">
    <property type="entry name" value="GTP-binding_EngA"/>
    <property type="match status" value="1"/>
</dbReference>
<dbReference type="PRINTS" id="PR00326">
    <property type="entry name" value="GTP1OBG"/>
</dbReference>
<dbReference type="SMART" id="SM00382">
    <property type="entry name" value="AAA"/>
    <property type="match status" value="2"/>
</dbReference>
<dbReference type="SUPFAM" id="SSF52540">
    <property type="entry name" value="P-loop containing nucleoside triphosphate hydrolases"/>
    <property type="match status" value="2"/>
</dbReference>
<dbReference type="PROSITE" id="PS51712">
    <property type="entry name" value="G_ENGA"/>
    <property type="match status" value="2"/>
</dbReference>
<proteinExistence type="inferred from homology"/>
<evidence type="ECO:0000255" key="1">
    <source>
        <dbReference type="HAMAP-Rule" id="MF_00195"/>
    </source>
</evidence>
<comment type="function">
    <text evidence="1">GTPase that plays an essential role in the late steps of ribosome biogenesis.</text>
</comment>
<comment type="subunit">
    <text evidence="1">Associates with the 50S ribosomal subunit.</text>
</comment>
<comment type="similarity">
    <text evidence="1">Belongs to the TRAFAC class TrmE-Era-EngA-EngB-Septin-like GTPase superfamily. EngA (Der) GTPase family.</text>
</comment>
<keyword id="KW-0342">GTP-binding</keyword>
<keyword id="KW-0547">Nucleotide-binding</keyword>
<keyword id="KW-0677">Repeat</keyword>
<keyword id="KW-0690">Ribosome biogenesis</keyword>
<gene>
    <name evidence="1" type="primary">der</name>
    <name type="synonym">engA</name>
    <name type="ordered locus">Bcep1808_1735</name>
</gene>
<organism>
    <name type="scientific">Burkholderia vietnamiensis (strain G4 / LMG 22486)</name>
    <name type="common">Burkholderia cepacia (strain R1808)</name>
    <dbReference type="NCBI Taxonomy" id="269482"/>
    <lineage>
        <taxon>Bacteria</taxon>
        <taxon>Pseudomonadati</taxon>
        <taxon>Pseudomonadota</taxon>
        <taxon>Betaproteobacteria</taxon>
        <taxon>Burkholderiales</taxon>
        <taxon>Burkholderiaceae</taxon>
        <taxon>Burkholderia</taxon>
        <taxon>Burkholderia cepacia complex</taxon>
    </lineage>
</organism>